<reference key="1">
    <citation type="journal article" date="2004" name="Nucleic Acids Res.">
        <title>Thermoadaptation trait revealed by the genome sequence of thermophilic Geobacillus kaustophilus.</title>
        <authorList>
            <person name="Takami H."/>
            <person name="Takaki Y."/>
            <person name="Chee G.-J."/>
            <person name="Nishi S."/>
            <person name="Shimamura S."/>
            <person name="Suzuki H."/>
            <person name="Matsui S."/>
            <person name="Uchiyama I."/>
        </authorList>
    </citation>
    <scope>NUCLEOTIDE SEQUENCE [LARGE SCALE GENOMIC DNA]</scope>
    <source>
        <strain>HTA426</strain>
    </source>
</reference>
<protein>
    <recommendedName>
        <fullName evidence="1">DNA-directed RNA polymerase subunit omega</fullName>
        <shortName evidence="1">RNAP omega subunit</shortName>
        <ecNumber evidence="1">2.7.7.6</ecNumber>
    </recommendedName>
    <alternativeName>
        <fullName evidence="1">RNA polymerase omega subunit</fullName>
    </alternativeName>
    <alternativeName>
        <fullName evidence="1">Transcriptase subunit omega</fullName>
    </alternativeName>
</protein>
<dbReference type="EC" id="2.7.7.6" evidence="1"/>
<dbReference type="EMBL" id="BA000043">
    <property type="protein sequence ID" value="BAD75453.1"/>
    <property type="molecule type" value="Genomic_DNA"/>
</dbReference>
<dbReference type="RefSeq" id="WP_011230668.1">
    <property type="nucleotide sequence ID" value="NC_006510.1"/>
</dbReference>
<dbReference type="SMR" id="Q5L0S7"/>
<dbReference type="STRING" id="235909.GK1168"/>
<dbReference type="GeneID" id="89611626"/>
<dbReference type="KEGG" id="gka:GK1168"/>
<dbReference type="eggNOG" id="COG1758">
    <property type="taxonomic scope" value="Bacteria"/>
</dbReference>
<dbReference type="HOGENOM" id="CLU_125406_6_0_9"/>
<dbReference type="Proteomes" id="UP000001172">
    <property type="component" value="Chromosome"/>
</dbReference>
<dbReference type="GO" id="GO:0000428">
    <property type="term" value="C:DNA-directed RNA polymerase complex"/>
    <property type="evidence" value="ECO:0007669"/>
    <property type="project" value="UniProtKB-KW"/>
</dbReference>
<dbReference type="GO" id="GO:0003677">
    <property type="term" value="F:DNA binding"/>
    <property type="evidence" value="ECO:0007669"/>
    <property type="project" value="UniProtKB-UniRule"/>
</dbReference>
<dbReference type="GO" id="GO:0003899">
    <property type="term" value="F:DNA-directed RNA polymerase activity"/>
    <property type="evidence" value="ECO:0007669"/>
    <property type="project" value="UniProtKB-UniRule"/>
</dbReference>
<dbReference type="GO" id="GO:0006351">
    <property type="term" value="P:DNA-templated transcription"/>
    <property type="evidence" value="ECO:0007669"/>
    <property type="project" value="UniProtKB-UniRule"/>
</dbReference>
<dbReference type="Gene3D" id="3.90.940.10">
    <property type="match status" value="1"/>
</dbReference>
<dbReference type="HAMAP" id="MF_00366">
    <property type="entry name" value="RNApol_bact_RpoZ"/>
    <property type="match status" value="1"/>
</dbReference>
<dbReference type="InterPro" id="IPR003716">
    <property type="entry name" value="DNA-dir_RNA_pol_omega"/>
</dbReference>
<dbReference type="InterPro" id="IPR006110">
    <property type="entry name" value="Pol_omega/Rpo6/RPB6"/>
</dbReference>
<dbReference type="InterPro" id="IPR036161">
    <property type="entry name" value="RPB6/omega-like_sf"/>
</dbReference>
<dbReference type="NCBIfam" id="TIGR00690">
    <property type="entry name" value="rpoZ"/>
    <property type="match status" value="1"/>
</dbReference>
<dbReference type="PANTHER" id="PTHR34476">
    <property type="entry name" value="DNA-DIRECTED RNA POLYMERASE SUBUNIT OMEGA"/>
    <property type="match status" value="1"/>
</dbReference>
<dbReference type="PANTHER" id="PTHR34476:SF1">
    <property type="entry name" value="DNA-DIRECTED RNA POLYMERASE SUBUNIT OMEGA"/>
    <property type="match status" value="1"/>
</dbReference>
<dbReference type="Pfam" id="PF01192">
    <property type="entry name" value="RNA_pol_Rpb6"/>
    <property type="match status" value="1"/>
</dbReference>
<dbReference type="SMART" id="SM01409">
    <property type="entry name" value="RNA_pol_Rpb6"/>
    <property type="match status" value="1"/>
</dbReference>
<dbReference type="SUPFAM" id="SSF63562">
    <property type="entry name" value="RPB6/omega subunit-like"/>
    <property type="match status" value="1"/>
</dbReference>
<gene>
    <name evidence="1" type="primary">rpoZ</name>
    <name type="ordered locus">GK1168</name>
</gene>
<organism>
    <name type="scientific">Geobacillus kaustophilus (strain HTA426)</name>
    <dbReference type="NCBI Taxonomy" id="235909"/>
    <lineage>
        <taxon>Bacteria</taxon>
        <taxon>Bacillati</taxon>
        <taxon>Bacillota</taxon>
        <taxon>Bacilli</taxon>
        <taxon>Bacillales</taxon>
        <taxon>Anoxybacillaceae</taxon>
        <taxon>Geobacillus</taxon>
        <taxon>Geobacillus thermoleovorans group</taxon>
    </lineage>
</organism>
<evidence type="ECO:0000255" key="1">
    <source>
        <dbReference type="HAMAP-Rule" id="MF_00366"/>
    </source>
</evidence>
<proteinExistence type="inferred from homology"/>
<accession>Q5L0S7</accession>
<name>RPOZ_GEOKA</name>
<feature type="chain" id="PRO_0000237461" description="DNA-directed RNA polymerase subunit omega">
    <location>
        <begin position="1"/>
        <end position="66"/>
    </location>
</feature>
<keyword id="KW-0240">DNA-directed RNA polymerase</keyword>
<keyword id="KW-0548">Nucleotidyltransferase</keyword>
<keyword id="KW-1185">Reference proteome</keyword>
<keyword id="KW-0804">Transcription</keyword>
<keyword id="KW-0808">Transferase</keyword>
<comment type="function">
    <text evidence="1">Promotes RNA polymerase assembly. Latches the N- and C-terminal regions of the beta' subunit thereby facilitating its interaction with the beta and alpha subunits.</text>
</comment>
<comment type="catalytic activity">
    <reaction evidence="1">
        <text>RNA(n) + a ribonucleoside 5'-triphosphate = RNA(n+1) + diphosphate</text>
        <dbReference type="Rhea" id="RHEA:21248"/>
        <dbReference type="Rhea" id="RHEA-COMP:14527"/>
        <dbReference type="Rhea" id="RHEA-COMP:17342"/>
        <dbReference type="ChEBI" id="CHEBI:33019"/>
        <dbReference type="ChEBI" id="CHEBI:61557"/>
        <dbReference type="ChEBI" id="CHEBI:140395"/>
        <dbReference type="EC" id="2.7.7.6"/>
    </reaction>
</comment>
<comment type="subunit">
    <text evidence="1">The RNAP catalytic core consists of 2 alpha, 1 beta, 1 beta' and 1 omega subunit. When a sigma factor is associated with the core the holoenzyme is formed, which can initiate transcription.</text>
</comment>
<comment type="similarity">
    <text evidence="1">Belongs to the RNA polymerase subunit omega family.</text>
</comment>
<sequence length="66" mass="7464">MLYPSIDLLMQKVDSKYKLVTVVAKRARELQDGAELMVKKPVSKKFVGQALEEIAGDKVELVEEEK</sequence>